<organism>
    <name type="scientific">Chlorella vulgaris</name>
    <name type="common">Green alga</name>
    <dbReference type="NCBI Taxonomy" id="3077"/>
    <lineage>
        <taxon>Eukaryota</taxon>
        <taxon>Viridiplantae</taxon>
        <taxon>Chlorophyta</taxon>
        <taxon>core chlorophytes</taxon>
        <taxon>Trebouxiophyceae</taxon>
        <taxon>Chlorellales</taxon>
        <taxon>Chlorellaceae</taxon>
        <taxon>Chlorella clade</taxon>
        <taxon>Chlorella</taxon>
    </lineage>
</organism>
<reference key="1">
    <citation type="journal article" date="1997" name="Proc. Natl. Acad. Sci. U.S.A.">
        <title>Complete nucleotide sequence of the chloroplast genome from the green alga Chlorella vulgaris: the existence of genes possibly involved in chloroplast division.</title>
        <authorList>
            <person name="Wakasugi T."/>
            <person name="Nagai T."/>
            <person name="Kapoor M."/>
            <person name="Sugita M."/>
            <person name="Ito M."/>
            <person name="Ito S."/>
            <person name="Tsudzuki J."/>
            <person name="Nakashima K."/>
            <person name="Tsudzuki T."/>
            <person name="Suzuki Y."/>
            <person name="Hamada A."/>
            <person name="Ohta T."/>
            <person name="Inamura A."/>
            <person name="Yoshinaga K."/>
            <person name="Sugiura M."/>
        </authorList>
    </citation>
    <scope>NUCLEOTIDE SEQUENCE [LARGE SCALE GENOMIC DNA]</scope>
    <source>
        <strain>IAM C-27 / Tamiya</strain>
    </source>
</reference>
<evidence type="ECO:0000255" key="1">
    <source>
        <dbReference type="HAMAP-Rule" id="MF_00522"/>
    </source>
</evidence>
<sequence length="41" mass="4433">MKDFTTYLSTAPVLTLVSLTAVAGLLIEINRFFPDALTAAF</sequence>
<name>PSAJ_CHLVU</name>
<feature type="chain" id="PRO_0000207786" description="Photosystem I reaction center subunit IX">
    <location>
        <begin position="1"/>
        <end position="41"/>
    </location>
</feature>
<feature type="transmembrane region" description="Helical" evidence="1">
    <location>
        <begin position="7"/>
        <end position="27"/>
    </location>
</feature>
<gene>
    <name evidence="1" type="primary">psaJ</name>
</gene>
<protein>
    <recommendedName>
        <fullName evidence="1">Photosystem I reaction center subunit IX</fullName>
    </recommendedName>
    <alternativeName>
        <fullName evidence="1">PSI-J</fullName>
    </alternativeName>
</protein>
<dbReference type="EMBL" id="AB001684">
    <property type="protein sequence ID" value="BAA57883.1"/>
    <property type="molecule type" value="Genomic_DNA"/>
</dbReference>
<dbReference type="PIR" id="T07236">
    <property type="entry name" value="T07236"/>
</dbReference>
<dbReference type="RefSeq" id="NP_045808.1">
    <property type="nucleotide sequence ID" value="NC_001865.1"/>
</dbReference>
<dbReference type="SMR" id="P56340"/>
<dbReference type="GeneID" id="809120"/>
<dbReference type="OrthoDB" id="1844838at2759"/>
<dbReference type="GO" id="GO:0009535">
    <property type="term" value="C:chloroplast thylakoid membrane"/>
    <property type="evidence" value="ECO:0007669"/>
    <property type="project" value="UniProtKB-SubCell"/>
</dbReference>
<dbReference type="GO" id="GO:0009522">
    <property type="term" value="C:photosystem I"/>
    <property type="evidence" value="ECO:0007669"/>
    <property type="project" value="UniProtKB-KW"/>
</dbReference>
<dbReference type="GO" id="GO:0015979">
    <property type="term" value="P:photosynthesis"/>
    <property type="evidence" value="ECO:0007669"/>
    <property type="project" value="UniProtKB-UniRule"/>
</dbReference>
<dbReference type="Gene3D" id="1.20.5.510">
    <property type="entry name" value="Single helix bin"/>
    <property type="match status" value="1"/>
</dbReference>
<dbReference type="HAMAP" id="MF_00522">
    <property type="entry name" value="PSI_PsaJ"/>
    <property type="match status" value="1"/>
</dbReference>
<dbReference type="InterPro" id="IPR002615">
    <property type="entry name" value="PSI_PsaJ"/>
</dbReference>
<dbReference type="InterPro" id="IPR036062">
    <property type="entry name" value="PSI_PsaJ_sf"/>
</dbReference>
<dbReference type="PANTHER" id="PTHR36082">
    <property type="match status" value="1"/>
</dbReference>
<dbReference type="PANTHER" id="PTHR36082:SF2">
    <property type="entry name" value="PHOTOSYSTEM I REACTION CENTER SUBUNIT IX"/>
    <property type="match status" value="1"/>
</dbReference>
<dbReference type="Pfam" id="PF01701">
    <property type="entry name" value="PSI_PsaJ"/>
    <property type="match status" value="1"/>
</dbReference>
<dbReference type="SUPFAM" id="SSF81544">
    <property type="entry name" value="Subunit IX of photosystem I reaction centre, PsaJ"/>
    <property type="match status" value="1"/>
</dbReference>
<comment type="function">
    <text evidence="1">May help in the organization of the PsaE and PsaF subunits.</text>
</comment>
<comment type="subcellular location">
    <subcellularLocation>
        <location evidence="1">Plastid</location>
        <location evidence="1">Chloroplast thylakoid membrane</location>
        <topology evidence="1">Single-pass membrane protein</topology>
    </subcellularLocation>
</comment>
<comment type="similarity">
    <text evidence="1">Belongs to the PsaJ family.</text>
</comment>
<accession>P56340</accession>
<geneLocation type="chloroplast"/>
<keyword id="KW-0150">Chloroplast</keyword>
<keyword id="KW-0472">Membrane</keyword>
<keyword id="KW-0602">Photosynthesis</keyword>
<keyword id="KW-0603">Photosystem I</keyword>
<keyword id="KW-0934">Plastid</keyword>
<keyword id="KW-0793">Thylakoid</keyword>
<keyword id="KW-0812">Transmembrane</keyword>
<keyword id="KW-1133">Transmembrane helix</keyword>
<proteinExistence type="inferred from homology"/>